<sequence length="368" mass="41222">MDPDRQADIAALDATLTTVERVIDVDGLRGRIEQLEKDASDPQLWDDQARAQKVTSDLSHAQGELRRIEELRGRLEDLPVLYELAAEEGGSDEVAEADAELTKLREDIEAMEVRTLLSGEYDEREALVTIRSGAGGVDAADWAEMLMRMYIRWAEQHKYPVEVFDTSYAEEAGIKSATFAVHAPYAYGNLSVEQGTHRLVRISPFDNQNRRQTSFADVEVLPVTETTDHIEIPEGDVRVDVYRSSGPGGQSVNTTDSAVRLTHIPTGIVVTCQNEKSQLQNKVSAMRVLQAKLLERKRLEERAEMDALKGDGGSSWGNQMRSYVLHPYQMVKDLRTEYEVGNPSAVLDGDIDGFLEAGIRWRNRKDDE</sequence>
<organism>
    <name type="scientific">Mycolicibacterium vanbaalenii (strain DSM 7251 / JCM 13017 / BCRC 16820 / KCTC 9966 / NRRL B-24157 / PYR-1)</name>
    <name type="common">Mycobacterium vanbaalenii</name>
    <dbReference type="NCBI Taxonomy" id="350058"/>
    <lineage>
        <taxon>Bacteria</taxon>
        <taxon>Bacillati</taxon>
        <taxon>Actinomycetota</taxon>
        <taxon>Actinomycetes</taxon>
        <taxon>Mycobacteriales</taxon>
        <taxon>Mycobacteriaceae</taxon>
        <taxon>Mycolicibacterium</taxon>
    </lineage>
</organism>
<proteinExistence type="inferred from homology"/>
<protein>
    <recommendedName>
        <fullName evidence="1">Peptide chain release factor 2</fullName>
        <shortName evidence="1">RF-2</shortName>
    </recommendedName>
</protein>
<gene>
    <name evidence="1" type="primary">prfB</name>
    <name type="ordered locus">Mvan_1911</name>
</gene>
<dbReference type="EMBL" id="CP000511">
    <property type="protein sequence ID" value="ABM12731.1"/>
    <property type="molecule type" value="Genomic_DNA"/>
</dbReference>
<dbReference type="RefSeq" id="WP_011779149.1">
    <property type="nucleotide sequence ID" value="NC_008726.1"/>
</dbReference>
<dbReference type="SMR" id="A1T6D1"/>
<dbReference type="STRING" id="350058.Mvan_1911"/>
<dbReference type="KEGG" id="mva:Mvan_1911"/>
<dbReference type="eggNOG" id="COG0216">
    <property type="taxonomic scope" value="Bacteria"/>
</dbReference>
<dbReference type="HOGENOM" id="CLU_036856_6_0_11"/>
<dbReference type="Proteomes" id="UP000009159">
    <property type="component" value="Chromosome"/>
</dbReference>
<dbReference type="GO" id="GO:0005737">
    <property type="term" value="C:cytoplasm"/>
    <property type="evidence" value="ECO:0007669"/>
    <property type="project" value="UniProtKB-SubCell"/>
</dbReference>
<dbReference type="GO" id="GO:0016149">
    <property type="term" value="F:translation release factor activity, codon specific"/>
    <property type="evidence" value="ECO:0007669"/>
    <property type="project" value="UniProtKB-UniRule"/>
</dbReference>
<dbReference type="FunFam" id="3.30.160.20:FF:000010">
    <property type="entry name" value="Peptide chain release factor 2"/>
    <property type="match status" value="1"/>
</dbReference>
<dbReference type="Gene3D" id="3.30.160.20">
    <property type="match status" value="1"/>
</dbReference>
<dbReference type="Gene3D" id="3.30.70.1660">
    <property type="match status" value="1"/>
</dbReference>
<dbReference type="Gene3D" id="1.20.58.410">
    <property type="entry name" value="Release factor"/>
    <property type="match status" value="1"/>
</dbReference>
<dbReference type="HAMAP" id="MF_00094">
    <property type="entry name" value="Rel_fac_2"/>
    <property type="match status" value="1"/>
</dbReference>
<dbReference type="InterPro" id="IPR005139">
    <property type="entry name" value="PCRF"/>
</dbReference>
<dbReference type="InterPro" id="IPR000352">
    <property type="entry name" value="Pep_chain_release_fac_I"/>
</dbReference>
<dbReference type="InterPro" id="IPR045853">
    <property type="entry name" value="Pep_chain_release_fac_I_sf"/>
</dbReference>
<dbReference type="InterPro" id="IPR004374">
    <property type="entry name" value="PrfB"/>
</dbReference>
<dbReference type="NCBIfam" id="TIGR00020">
    <property type="entry name" value="prfB"/>
    <property type="match status" value="1"/>
</dbReference>
<dbReference type="PANTHER" id="PTHR43116:SF3">
    <property type="entry name" value="CLASS I PEPTIDE CHAIN RELEASE FACTOR"/>
    <property type="match status" value="1"/>
</dbReference>
<dbReference type="PANTHER" id="PTHR43116">
    <property type="entry name" value="PEPTIDE CHAIN RELEASE FACTOR 2"/>
    <property type="match status" value="1"/>
</dbReference>
<dbReference type="Pfam" id="PF03462">
    <property type="entry name" value="PCRF"/>
    <property type="match status" value="1"/>
</dbReference>
<dbReference type="Pfam" id="PF00472">
    <property type="entry name" value="RF-1"/>
    <property type="match status" value="1"/>
</dbReference>
<dbReference type="SMART" id="SM00937">
    <property type="entry name" value="PCRF"/>
    <property type="match status" value="1"/>
</dbReference>
<dbReference type="SUPFAM" id="SSF75620">
    <property type="entry name" value="Release factor"/>
    <property type="match status" value="1"/>
</dbReference>
<dbReference type="PROSITE" id="PS00745">
    <property type="entry name" value="RF_PROK_I"/>
    <property type="match status" value="1"/>
</dbReference>
<evidence type="ECO:0000255" key="1">
    <source>
        <dbReference type="HAMAP-Rule" id="MF_00094"/>
    </source>
</evidence>
<comment type="function">
    <text evidence="1">Peptide chain release factor 2 directs the termination of translation in response to the peptide chain termination codons UGA and UAA.</text>
</comment>
<comment type="subcellular location">
    <subcellularLocation>
        <location evidence="1">Cytoplasm</location>
    </subcellularLocation>
</comment>
<comment type="PTM">
    <text evidence="1">Methylated by PrmC. Methylation increases the termination efficiency of RF2.</text>
</comment>
<comment type="similarity">
    <text evidence="1">Belongs to the prokaryotic/mitochondrial release factor family.</text>
</comment>
<accession>A1T6D1</accession>
<name>RF2_MYCVP</name>
<feature type="chain" id="PRO_1000005004" description="Peptide chain release factor 2">
    <location>
        <begin position="1"/>
        <end position="368"/>
    </location>
</feature>
<feature type="modified residue" description="N5-methylglutamine" evidence="1">
    <location>
        <position position="250"/>
    </location>
</feature>
<keyword id="KW-0963">Cytoplasm</keyword>
<keyword id="KW-0488">Methylation</keyword>
<keyword id="KW-0648">Protein biosynthesis</keyword>
<reference key="1">
    <citation type="submission" date="2006-12" db="EMBL/GenBank/DDBJ databases">
        <title>Complete sequence of Mycobacterium vanbaalenii PYR-1.</title>
        <authorList>
            <consortium name="US DOE Joint Genome Institute"/>
            <person name="Copeland A."/>
            <person name="Lucas S."/>
            <person name="Lapidus A."/>
            <person name="Barry K."/>
            <person name="Detter J.C."/>
            <person name="Glavina del Rio T."/>
            <person name="Hammon N."/>
            <person name="Israni S."/>
            <person name="Dalin E."/>
            <person name="Tice H."/>
            <person name="Pitluck S."/>
            <person name="Singan V."/>
            <person name="Schmutz J."/>
            <person name="Larimer F."/>
            <person name="Land M."/>
            <person name="Hauser L."/>
            <person name="Kyrpides N."/>
            <person name="Anderson I.J."/>
            <person name="Miller C."/>
            <person name="Richardson P."/>
        </authorList>
    </citation>
    <scope>NUCLEOTIDE SEQUENCE [LARGE SCALE GENOMIC DNA]</scope>
    <source>
        <strain>DSM 7251 / JCM 13017 / BCRC 16820 / KCTC 9966 / NRRL B-24157 / PYR-1</strain>
    </source>
</reference>